<gene>
    <name type="primary">BBP1(3)</name>
</gene>
<comment type="function">
    <text>Activates B-regulated development.</text>
</comment>
<comment type="subcellular location">
    <subcellularLocation>
        <location evidence="3">Cell membrane</location>
        <topology evidence="3">Lipid-anchor</topology>
        <orientation evidence="3">Cytoplasmic side</orientation>
    </subcellularLocation>
</comment>
<dbReference type="EMBL" id="U74495">
    <property type="protein sequence ID" value="AAB41861.1"/>
    <property type="molecule type" value="Genomic_DNA"/>
</dbReference>
<dbReference type="GO" id="GO:0005886">
    <property type="term" value="C:plasma membrane"/>
    <property type="evidence" value="ECO:0007669"/>
    <property type="project" value="UniProtKB-SubCell"/>
</dbReference>
<dbReference type="GO" id="GO:0000772">
    <property type="term" value="F:mating pheromone activity"/>
    <property type="evidence" value="ECO:0007669"/>
    <property type="project" value="InterPro"/>
</dbReference>
<dbReference type="InterPro" id="IPR012597">
    <property type="entry name" value="Pheromone"/>
</dbReference>
<dbReference type="Pfam" id="PF08015">
    <property type="entry name" value="Pheromone"/>
    <property type="match status" value="1"/>
</dbReference>
<accession>P78744</accession>
<feature type="propeptide" id="PRO_0000020799" evidence="1">
    <location>
        <begin position="1"/>
        <end status="unknown"/>
    </location>
</feature>
<feature type="peptide" id="PRO_0000020800" description="Mating-type pheromone BBP1(3)">
    <location>
        <begin status="unknown"/>
        <end position="70"/>
    </location>
</feature>
<feature type="propeptide" id="PRO_0000020801" description="Removed in mature form" evidence="1">
    <location>
        <begin position="71"/>
        <end position="73"/>
    </location>
</feature>
<feature type="region of interest" description="Disordered" evidence="2">
    <location>
        <begin position="1"/>
        <end position="41"/>
    </location>
</feature>
<feature type="modified residue" description="Cysteine methyl ester" evidence="1">
    <location>
        <position position="70"/>
    </location>
</feature>
<feature type="lipid moiety-binding region" description="S-farnesyl cysteine" evidence="1">
    <location>
        <position position="70"/>
    </location>
</feature>
<reference key="1">
    <citation type="journal article" date="1997" name="Genetics">
        <title>Multiple genes encoding pheromones and a pheromone receptor define the B beta 1 mating-type specificity in Schizophyllum commune.</title>
        <authorList>
            <person name="Vaillancourt L.J."/>
            <person name="Raudaskoski M."/>
            <person name="Specht C.A."/>
            <person name="Raper C.A."/>
        </authorList>
    </citation>
    <scope>NUCLEOTIDE SEQUENCE [GENOMIC DNA]</scope>
    <source>
        <strain>ATCC 44201 / CBS 340.81 / UVM 4-40 / 4-40</strain>
    </source>
</reference>
<protein>
    <recommendedName>
        <fullName>Mating-type pheromone BBP1(3)</fullName>
    </recommendedName>
</protein>
<name>BB13_SCHCO</name>
<organism>
    <name type="scientific">Schizophyllum commune</name>
    <name type="common">Split gill fungus</name>
    <dbReference type="NCBI Taxonomy" id="5334"/>
    <lineage>
        <taxon>Eukaryota</taxon>
        <taxon>Fungi</taxon>
        <taxon>Dikarya</taxon>
        <taxon>Basidiomycota</taxon>
        <taxon>Agaricomycotina</taxon>
        <taxon>Agaricomycetes</taxon>
        <taxon>Agaricomycetidae</taxon>
        <taxon>Agaricales</taxon>
        <taxon>Schizophyllaceae</taxon>
        <taxon>Schizophyllum</taxon>
    </lineage>
</organism>
<sequence>MASSVLARPGPSTVLPAMTRPPPPMAHRAAATPSFARSSQPQLTDDAVLALLANAEHTEAGEETTARGWCVVA</sequence>
<evidence type="ECO:0000255" key="1"/>
<evidence type="ECO:0000256" key="2">
    <source>
        <dbReference type="SAM" id="MobiDB-lite"/>
    </source>
</evidence>
<evidence type="ECO:0000305" key="3"/>
<keyword id="KW-1003">Cell membrane</keyword>
<keyword id="KW-0449">Lipoprotein</keyword>
<keyword id="KW-0472">Membrane</keyword>
<keyword id="KW-0488">Methylation</keyword>
<keyword id="KW-0588">Pheromone</keyword>
<keyword id="KW-0636">Prenylation</keyword>
<proteinExistence type="inferred from homology"/>